<feature type="chain" id="PRO_1000121274" description="DNA-directed RNA polymerase subunit omega">
    <location>
        <begin position="1"/>
        <end position="91"/>
    </location>
</feature>
<gene>
    <name evidence="1" type="primary">rpoZ</name>
    <name type="ordered locus">SbBS512_E4100</name>
</gene>
<protein>
    <recommendedName>
        <fullName evidence="1">DNA-directed RNA polymerase subunit omega</fullName>
        <shortName evidence="1">RNAP omega subunit</shortName>
        <ecNumber evidence="1">2.7.7.6</ecNumber>
    </recommendedName>
    <alternativeName>
        <fullName evidence="1">RNA polymerase omega subunit</fullName>
    </alternativeName>
    <alternativeName>
        <fullName evidence="1">Transcriptase subunit omega</fullName>
    </alternativeName>
</protein>
<name>RPOZ_SHIB3</name>
<comment type="function">
    <text evidence="1">Promotes RNA polymerase assembly. Latches the N- and C-terminal regions of the beta' subunit thereby facilitating its interaction with the beta and alpha subunits.</text>
</comment>
<comment type="catalytic activity">
    <reaction evidence="1">
        <text>RNA(n) + a ribonucleoside 5'-triphosphate = RNA(n+1) + diphosphate</text>
        <dbReference type="Rhea" id="RHEA:21248"/>
        <dbReference type="Rhea" id="RHEA-COMP:14527"/>
        <dbReference type="Rhea" id="RHEA-COMP:17342"/>
        <dbReference type="ChEBI" id="CHEBI:33019"/>
        <dbReference type="ChEBI" id="CHEBI:61557"/>
        <dbReference type="ChEBI" id="CHEBI:140395"/>
        <dbReference type="EC" id="2.7.7.6"/>
    </reaction>
</comment>
<comment type="subunit">
    <text evidence="1">The RNAP catalytic core consists of 2 alpha, 1 beta, 1 beta' and 1 omega subunit. When a sigma factor is associated with the core the holoenzyme is formed, which can initiate transcription.</text>
</comment>
<comment type="similarity">
    <text evidence="1">Belongs to the RNA polymerase subunit omega family.</text>
</comment>
<reference key="1">
    <citation type="submission" date="2008-05" db="EMBL/GenBank/DDBJ databases">
        <title>Complete sequence of Shigella boydii serotype 18 strain BS512.</title>
        <authorList>
            <person name="Rasko D.A."/>
            <person name="Rosovitz M."/>
            <person name="Maurelli A.T."/>
            <person name="Myers G."/>
            <person name="Seshadri R."/>
            <person name="Cer R."/>
            <person name="Jiang L."/>
            <person name="Ravel J."/>
            <person name="Sebastian Y."/>
        </authorList>
    </citation>
    <scope>NUCLEOTIDE SEQUENCE [LARGE SCALE GENOMIC DNA]</scope>
    <source>
        <strain>CDC 3083-94 / BS512</strain>
    </source>
</reference>
<dbReference type="EC" id="2.7.7.6" evidence="1"/>
<dbReference type="EMBL" id="CP001063">
    <property type="protein sequence ID" value="ACD09568.1"/>
    <property type="molecule type" value="Genomic_DNA"/>
</dbReference>
<dbReference type="RefSeq" id="WP_000135058.1">
    <property type="nucleotide sequence ID" value="NC_010658.1"/>
</dbReference>
<dbReference type="SMR" id="B2TTX9"/>
<dbReference type="STRING" id="344609.SbBS512_E4100"/>
<dbReference type="GeneID" id="98390719"/>
<dbReference type="KEGG" id="sbc:SbBS512_E4100"/>
<dbReference type="HOGENOM" id="CLU_125406_5_3_6"/>
<dbReference type="Proteomes" id="UP000001030">
    <property type="component" value="Chromosome"/>
</dbReference>
<dbReference type="GO" id="GO:0000428">
    <property type="term" value="C:DNA-directed RNA polymerase complex"/>
    <property type="evidence" value="ECO:0007669"/>
    <property type="project" value="UniProtKB-KW"/>
</dbReference>
<dbReference type="GO" id="GO:0003677">
    <property type="term" value="F:DNA binding"/>
    <property type="evidence" value="ECO:0007669"/>
    <property type="project" value="UniProtKB-UniRule"/>
</dbReference>
<dbReference type="GO" id="GO:0003899">
    <property type="term" value="F:DNA-directed RNA polymerase activity"/>
    <property type="evidence" value="ECO:0007669"/>
    <property type="project" value="UniProtKB-UniRule"/>
</dbReference>
<dbReference type="GO" id="GO:0006351">
    <property type="term" value="P:DNA-templated transcription"/>
    <property type="evidence" value="ECO:0007669"/>
    <property type="project" value="UniProtKB-UniRule"/>
</dbReference>
<dbReference type="FunFam" id="3.90.940.10:FF:000001">
    <property type="entry name" value="DNA-directed RNA polymerase subunit omega"/>
    <property type="match status" value="1"/>
</dbReference>
<dbReference type="Gene3D" id="3.90.940.10">
    <property type="match status" value="1"/>
</dbReference>
<dbReference type="HAMAP" id="MF_00366">
    <property type="entry name" value="RNApol_bact_RpoZ"/>
    <property type="match status" value="1"/>
</dbReference>
<dbReference type="InterPro" id="IPR003716">
    <property type="entry name" value="DNA-dir_RNA_pol_omega"/>
</dbReference>
<dbReference type="InterPro" id="IPR006110">
    <property type="entry name" value="Pol_omega/Rpo6/RPB6"/>
</dbReference>
<dbReference type="InterPro" id="IPR036161">
    <property type="entry name" value="RPB6/omega-like_sf"/>
</dbReference>
<dbReference type="NCBIfam" id="TIGR00690">
    <property type="entry name" value="rpoZ"/>
    <property type="match status" value="1"/>
</dbReference>
<dbReference type="PANTHER" id="PTHR34476">
    <property type="entry name" value="DNA-DIRECTED RNA POLYMERASE SUBUNIT OMEGA"/>
    <property type="match status" value="1"/>
</dbReference>
<dbReference type="PANTHER" id="PTHR34476:SF1">
    <property type="entry name" value="DNA-DIRECTED RNA POLYMERASE SUBUNIT OMEGA"/>
    <property type="match status" value="1"/>
</dbReference>
<dbReference type="Pfam" id="PF01192">
    <property type="entry name" value="RNA_pol_Rpb6"/>
    <property type="match status" value="1"/>
</dbReference>
<dbReference type="SMART" id="SM01409">
    <property type="entry name" value="RNA_pol_Rpb6"/>
    <property type="match status" value="1"/>
</dbReference>
<dbReference type="SUPFAM" id="SSF63562">
    <property type="entry name" value="RPB6/omega subunit-like"/>
    <property type="match status" value="1"/>
</dbReference>
<keyword id="KW-0240">DNA-directed RNA polymerase</keyword>
<keyword id="KW-0548">Nucleotidyltransferase</keyword>
<keyword id="KW-1185">Reference proteome</keyword>
<keyword id="KW-0804">Transcription</keyword>
<keyword id="KW-0808">Transferase</keyword>
<proteinExistence type="inferred from homology"/>
<accession>B2TTX9</accession>
<evidence type="ECO:0000255" key="1">
    <source>
        <dbReference type="HAMAP-Rule" id="MF_00366"/>
    </source>
</evidence>
<organism>
    <name type="scientific">Shigella boydii serotype 18 (strain CDC 3083-94 / BS512)</name>
    <dbReference type="NCBI Taxonomy" id="344609"/>
    <lineage>
        <taxon>Bacteria</taxon>
        <taxon>Pseudomonadati</taxon>
        <taxon>Pseudomonadota</taxon>
        <taxon>Gammaproteobacteria</taxon>
        <taxon>Enterobacterales</taxon>
        <taxon>Enterobacteriaceae</taxon>
        <taxon>Shigella</taxon>
    </lineage>
</organism>
<sequence>MARVTVQDAVEKIGNRFDLVLVAARRARQMQVGGKDPLVPEENDKTTVIALREIEEGLINNQILDVRERQEQQEQEAAELQAVTAIAEGRR</sequence>